<comment type="function">
    <text evidence="1">Synthesizes alpha-1,4-glucan chains using ADP-glucose.</text>
</comment>
<comment type="catalytic activity">
    <reaction evidence="1">
        <text>[(1-&gt;4)-alpha-D-glucosyl](n) + ADP-alpha-D-glucose = [(1-&gt;4)-alpha-D-glucosyl](n+1) + ADP + H(+)</text>
        <dbReference type="Rhea" id="RHEA:18189"/>
        <dbReference type="Rhea" id="RHEA-COMP:9584"/>
        <dbReference type="Rhea" id="RHEA-COMP:9587"/>
        <dbReference type="ChEBI" id="CHEBI:15378"/>
        <dbReference type="ChEBI" id="CHEBI:15444"/>
        <dbReference type="ChEBI" id="CHEBI:57498"/>
        <dbReference type="ChEBI" id="CHEBI:456216"/>
        <dbReference type="EC" id="2.4.1.21"/>
    </reaction>
</comment>
<comment type="pathway">
    <text evidence="1">Glycan biosynthesis; glycogen biosynthesis.</text>
</comment>
<comment type="similarity">
    <text evidence="1">Belongs to the glycosyltransferase 1 family. Bacterial/plant glycogen synthase subfamily.</text>
</comment>
<evidence type="ECO:0000255" key="1">
    <source>
        <dbReference type="HAMAP-Rule" id="MF_00484"/>
    </source>
</evidence>
<evidence type="ECO:0000256" key="2">
    <source>
        <dbReference type="SAM" id="MobiDB-lite"/>
    </source>
</evidence>
<proteinExistence type="inferred from homology"/>
<name>GLGA_PROMM</name>
<protein>
    <recommendedName>
        <fullName evidence="1">Glycogen synthase</fullName>
        <ecNumber evidence="1">2.4.1.21</ecNumber>
    </recommendedName>
    <alternativeName>
        <fullName evidence="1">Starch [bacterial glycogen] synthase</fullName>
    </alternativeName>
</protein>
<organism>
    <name type="scientific">Prochlorococcus marinus (strain MIT 9313)</name>
    <dbReference type="NCBI Taxonomy" id="74547"/>
    <lineage>
        <taxon>Bacteria</taxon>
        <taxon>Bacillati</taxon>
        <taxon>Cyanobacteriota</taxon>
        <taxon>Cyanophyceae</taxon>
        <taxon>Synechococcales</taxon>
        <taxon>Prochlorococcaceae</taxon>
        <taxon>Prochlorococcus</taxon>
    </lineage>
</organism>
<feature type="chain" id="PRO_0000188630" description="Glycogen synthase">
    <location>
        <begin position="1"/>
        <end position="499"/>
    </location>
</feature>
<feature type="region of interest" description="Disordered" evidence="2">
    <location>
        <begin position="471"/>
        <end position="499"/>
    </location>
</feature>
<feature type="compositionally biased region" description="Polar residues" evidence="2">
    <location>
        <begin position="471"/>
        <end position="485"/>
    </location>
</feature>
<feature type="compositionally biased region" description="Basic residues" evidence="2">
    <location>
        <begin position="488"/>
        <end position="499"/>
    </location>
</feature>
<feature type="binding site" evidence="1">
    <location>
        <position position="15"/>
    </location>
    <ligand>
        <name>ADP-alpha-D-glucose</name>
        <dbReference type="ChEBI" id="CHEBI:57498"/>
    </ligand>
</feature>
<sequence length="499" mass="56524">MRVLFAAAECAPMVKVGGMGDVVGSLPPALAKLDHDVRLIMPGYGKLWSLLDIPTDPIWRGQTMGNEFAIYETSHPSNGLPLYLVGHPVFDPERIYGGEDEDWRFTFFASATTEFAWNVWKPQVLHCHDWHTGMIPVWMHQDPEISTVFTIHNLKYQGPWRWKLDRMTWCPWYMQGDHTMAAALLYADRVNAVSPTYAREICTSEYGESLDGLLNYISGKLRGILNGIDLQDWDPGNDKSLPATFNADDLSGRAVNKQALQQRMGLEVNPDTYLLGMVSRLVDQKGVDLLLQVTERLLAYTDSQIVVLGTGERGLESGLWQLAIQNPGRFSVFLTYDDDLARLIYGGSDAFLMPSRFEPCGISQLLAMRYGSVPVVRKVGGLVDTVPSYDPIHQTGTGFCFDRFEPVDFYTALVRSWEAFRHRDCWRELQQRGMTQNYSWDRSALDYEQMYRDVCGFKEPSPDAAVVEQFSLGQGSDPSRQNQDSNAKKRTRRKKKGND</sequence>
<accession>Q7V8F0</accession>
<reference key="1">
    <citation type="journal article" date="2003" name="Nature">
        <title>Genome divergence in two Prochlorococcus ecotypes reflects oceanic niche differentiation.</title>
        <authorList>
            <person name="Rocap G."/>
            <person name="Larimer F.W."/>
            <person name="Lamerdin J.E."/>
            <person name="Malfatti S."/>
            <person name="Chain P."/>
            <person name="Ahlgren N.A."/>
            <person name="Arellano A."/>
            <person name="Coleman M."/>
            <person name="Hauser L."/>
            <person name="Hess W.R."/>
            <person name="Johnson Z.I."/>
            <person name="Land M.L."/>
            <person name="Lindell D."/>
            <person name="Post A.F."/>
            <person name="Regala W."/>
            <person name="Shah M."/>
            <person name="Shaw S.L."/>
            <person name="Steglich C."/>
            <person name="Sullivan M.B."/>
            <person name="Ting C.S."/>
            <person name="Tolonen A."/>
            <person name="Webb E.A."/>
            <person name="Zinser E.R."/>
            <person name="Chisholm S.W."/>
        </authorList>
    </citation>
    <scope>NUCLEOTIDE SEQUENCE [LARGE SCALE GENOMIC DNA]</scope>
    <source>
        <strain>MIT 9313</strain>
    </source>
</reference>
<dbReference type="EC" id="2.4.1.21" evidence="1"/>
<dbReference type="EMBL" id="BX548175">
    <property type="protein sequence ID" value="CAE20578.1"/>
    <property type="molecule type" value="Genomic_DNA"/>
</dbReference>
<dbReference type="RefSeq" id="WP_011129782.1">
    <property type="nucleotide sequence ID" value="NC_005071.1"/>
</dbReference>
<dbReference type="SMR" id="Q7V8F0"/>
<dbReference type="CAZy" id="GT5">
    <property type="family name" value="Glycosyltransferase Family 5"/>
</dbReference>
<dbReference type="KEGG" id="pmt:PMT_0403"/>
<dbReference type="eggNOG" id="COG0297">
    <property type="taxonomic scope" value="Bacteria"/>
</dbReference>
<dbReference type="HOGENOM" id="CLU_009583_18_2_3"/>
<dbReference type="OrthoDB" id="9808590at2"/>
<dbReference type="UniPathway" id="UPA00164"/>
<dbReference type="Proteomes" id="UP000001423">
    <property type="component" value="Chromosome"/>
</dbReference>
<dbReference type="GO" id="GO:0009011">
    <property type="term" value="F:alpha-1,4-glucan glucosyltransferase (ADP-glucose donor) activity"/>
    <property type="evidence" value="ECO:0007669"/>
    <property type="project" value="UniProtKB-UniRule"/>
</dbReference>
<dbReference type="GO" id="GO:0004373">
    <property type="term" value="F:alpha-1,4-glucan glucosyltransferase (UDP-glucose donor) activity"/>
    <property type="evidence" value="ECO:0007669"/>
    <property type="project" value="InterPro"/>
</dbReference>
<dbReference type="GO" id="GO:0005978">
    <property type="term" value="P:glycogen biosynthetic process"/>
    <property type="evidence" value="ECO:0007669"/>
    <property type="project" value="UniProtKB-UniRule"/>
</dbReference>
<dbReference type="CDD" id="cd03791">
    <property type="entry name" value="GT5_Glycogen_synthase_DULL1-like"/>
    <property type="match status" value="1"/>
</dbReference>
<dbReference type="Gene3D" id="3.40.50.2000">
    <property type="entry name" value="Glycogen Phosphorylase B"/>
    <property type="match status" value="2"/>
</dbReference>
<dbReference type="HAMAP" id="MF_00484">
    <property type="entry name" value="Glycogen_synth"/>
    <property type="match status" value="1"/>
</dbReference>
<dbReference type="InterPro" id="IPR001296">
    <property type="entry name" value="Glyco_trans_1"/>
</dbReference>
<dbReference type="InterPro" id="IPR011835">
    <property type="entry name" value="GS/SS"/>
</dbReference>
<dbReference type="InterPro" id="IPR013534">
    <property type="entry name" value="Starch_synth_cat_dom"/>
</dbReference>
<dbReference type="NCBIfam" id="TIGR02095">
    <property type="entry name" value="glgA"/>
    <property type="match status" value="1"/>
</dbReference>
<dbReference type="NCBIfam" id="NF001900">
    <property type="entry name" value="PRK00654.1-3"/>
    <property type="match status" value="1"/>
</dbReference>
<dbReference type="PANTHER" id="PTHR45825:SF11">
    <property type="entry name" value="ALPHA AMYLASE DOMAIN-CONTAINING PROTEIN"/>
    <property type="match status" value="1"/>
</dbReference>
<dbReference type="PANTHER" id="PTHR45825">
    <property type="entry name" value="GRANULE-BOUND STARCH SYNTHASE 1, CHLOROPLASTIC/AMYLOPLASTIC"/>
    <property type="match status" value="1"/>
</dbReference>
<dbReference type="Pfam" id="PF08323">
    <property type="entry name" value="Glyco_transf_5"/>
    <property type="match status" value="1"/>
</dbReference>
<dbReference type="Pfam" id="PF00534">
    <property type="entry name" value="Glycos_transf_1"/>
    <property type="match status" value="1"/>
</dbReference>
<dbReference type="SUPFAM" id="SSF53756">
    <property type="entry name" value="UDP-Glycosyltransferase/glycogen phosphorylase"/>
    <property type="match status" value="1"/>
</dbReference>
<gene>
    <name evidence="1" type="primary">glgA</name>
    <name type="ordered locus">PMT_0403</name>
</gene>
<keyword id="KW-0320">Glycogen biosynthesis</keyword>
<keyword id="KW-0328">Glycosyltransferase</keyword>
<keyword id="KW-1185">Reference proteome</keyword>
<keyword id="KW-0808">Transferase</keyword>